<name>MLES_LACPL</name>
<proteinExistence type="evidence at protein level"/>
<feature type="chain" id="PRO_0000435671" description="Malolactic enzyme">
    <location>
        <begin position="1"/>
        <end position="547"/>
    </location>
</feature>
<feature type="active site" description="Proton donor" evidence="1">
    <location>
        <position position="92"/>
    </location>
</feature>
<feature type="active site" description="Proton acceptor" evidence="1">
    <location>
        <position position="165"/>
    </location>
</feature>
<feature type="binding site" evidence="1">
    <location>
        <position position="165"/>
    </location>
    <ligand>
        <name>substrate</name>
    </ligand>
</feature>
<feature type="binding site" evidence="1">
    <location>
        <position position="236"/>
    </location>
    <ligand>
        <name>Mn(2+)</name>
        <dbReference type="ChEBI" id="CHEBI:29035"/>
    </ligand>
</feature>
<feature type="binding site" evidence="1">
    <location>
        <position position="237"/>
    </location>
    <ligand>
        <name>Mn(2+)</name>
        <dbReference type="ChEBI" id="CHEBI:29035"/>
    </ligand>
</feature>
<feature type="binding site" evidence="1">
    <location>
        <position position="260"/>
    </location>
    <ligand>
        <name>Mn(2+)</name>
        <dbReference type="ChEBI" id="CHEBI:29035"/>
    </ligand>
</feature>
<feature type="binding site" evidence="1">
    <location>
        <begin position="293"/>
        <end position="296"/>
    </location>
    <ligand>
        <name>NAD(+)</name>
        <dbReference type="ChEBI" id="CHEBI:57540"/>
    </ligand>
</feature>
<feature type="binding site" evidence="1">
    <location>
        <position position="405"/>
    </location>
    <ligand>
        <name>NAD(+)</name>
        <dbReference type="ChEBI" id="CHEBI:57540"/>
    </ligand>
</feature>
<feature type="binding site" evidence="1">
    <location>
        <position position="450"/>
    </location>
    <ligand>
        <name>NAD(+)</name>
        <dbReference type="ChEBI" id="CHEBI:57540"/>
    </ligand>
</feature>
<feature type="binding site" evidence="1">
    <location>
        <position position="450"/>
    </location>
    <ligand>
        <name>substrate</name>
    </ligand>
</feature>
<gene>
    <name evidence="3" type="primary">mleS</name>
    <name type="ordered locus">lp_1118</name>
</gene>
<keyword id="KW-0456">Lyase</keyword>
<keyword id="KW-0464">Manganese</keyword>
<keyword id="KW-0479">Metal-binding</keyword>
<keyword id="KW-0520">NAD</keyword>
<keyword id="KW-1185">Reference proteome</keyword>
<protein>
    <recommendedName>
        <fullName evidence="3">Malolactic enzyme</fullName>
        <shortName evidence="3">MLE</shortName>
        <ecNumber evidence="2">4.1.1.101</ecNumber>
    </recommendedName>
</protein>
<accession>F9UMS6</accession>
<evidence type="ECO:0000250" key="1">
    <source>
        <dbReference type="UniProtKB" id="P40927"/>
    </source>
</evidence>
<evidence type="ECO:0000269" key="2">
    <source>
    </source>
</evidence>
<evidence type="ECO:0000303" key="3">
    <source>
    </source>
</evidence>
<evidence type="ECO:0000305" key="4"/>
<organism>
    <name type="scientific">Lactiplantibacillus plantarum (strain ATCC BAA-793 / NCIMB 8826 / WCFS1)</name>
    <name type="common">Lactobacillus plantarum</name>
    <dbReference type="NCBI Taxonomy" id="220668"/>
    <lineage>
        <taxon>Bacteria</taxon>
        <taxon>Bacillati</taxon>
        <taxon>Bacillota</taxon>
        <taxon>Bacilli</taxon>
        <taxon>Lactobacillales</taxon>
        <taxon>Lactobacillaceae</taxon>
        <taxon>Lactiplantibacillus</taxon>
    </lineage>
</organism>
<sequence length="547" mass="59465">MTKTASEILNNPFLNKGTAFTKEERQALGLTGTLPSKVQTIDEQATQAYAQFKSKPSRLEQRIFLMNLFNENRTLFFHLMDEHVVEFMPIVYDPVVADSIEQYNELFLDPQNAAFVSVDAPEDIEATLKNAADGRDIRLVVVTDAEGILGMGDWGVNGVDIAIGKLMVYTAAAGIDPSQVLPVSIDAGTNNQKLLDDPLYLGNRHKCVSGEQYYDVIDKFVAAEQQLFPDSLLHFEDFGRDNAQVILDKYKDQIATFNDDIQGTGMVVLAGILGALNISKESIKDQKILSFGAGTAGMGIANQILDELMQAGLTEEEAKQHFYAVDKQGLLFDDTEGLTPAQKAFTRKRSEFSNADELTNLEAVVKAVHPTVMIGTSTQPGTFTESIIKEMAAHTERPIIFPLSNPTKLAEAKAEDLIKWTDGRALVATGIPADDVEYKGVTYQIGQGNNALMYPGLGFGLIASTAKVLNAETLSAACHALGGIVDTSKPGAAVLPPVAKITEFSQKLAEVVAQSVIDQKLNKEPIADAKQAVADMKWVPEYRAISK</sequence>
<comment type="function">
    <text evidence="2">Involved in the malolactic fermentation (MLF) of wine, which results in a natural decrease in acidity and favorable changes in wine flavors. Catalyzes the decarboxylation of L-malate to L-lactate.</text>
</comment>
<comment type="catalytic activity">
    <reaction evidence="2">
        <text>(S)-malate + H(+) = (S)-lactate + CO2</text>
        <dbReference type="Rhea" id="RHEA:46276"/>
        <dbReference type="ChEBI" id="CHEBI:15378"/>
        <dbReference type="ChEBI" id="CHEBI:15589"/>
        <dbReference type="ChEBI" id="CHEBI:16526"/>
        <dbReference type="ChEBI" id="CHEBI:16651"/>
        <dbReference type="EC" id="4.1.1.101"/>
    </reaction>
</comment>
<comment type="cofactor">
    <cofactor evidence="2">
        <name>Mn(2+)</name>
        <dbReference type="ChEBI" id="CHEBI:29035"/>
    </cofactor>
</comment>
<comment type="cofactor">
    <cofactor evidence="2">
        <name>NAD(+)</name>
        <dbReference type="ChEBI" id="CHEBI:57540"/>
    </cofactor>
</comment>
<comment type="biophysicochemical properties">
    <kinetics>
        <KM evidence="2">0.012 mM for manganese</KM>
        <KM evidence="2">0.059 mM for NAD</KM>
        <KM evidence="2">9.5 mM for (S)-malate</KM>
    </kinetics>
</comment>
<comment type="subunit">
    <text evidence="2">Homodimer.</text>
</comment>
<comment type="similarity">
    <text evidence="4">Belongs to the malic enzymes family.</text>
</comment>
<reference key="1">
    <citation type="journal article" date="2003" name="Proc. Natl. Acad. Sci. U.S.A.">
        <title>Complete genome sequence of Lactobacillus plantarum WCFS1.</title>
        <authorList>
            <person name="Kleerebezem M."/>
            <person name="Boekhorst J."/>
            <person name="van Kranenburg R."/>
            <person name="Molenaar D."/>
            <person name="Kuipers O.P."/>
            <person name="Leer R."/>
            <person name="Tarchini R."/>
            <person name="Peters S.A."/>
            <person name="Sandbrink H.M."/>
            <person name="Fiers M.W.E.J."/>
            <person name="Stiekema W."/>
            <person name="Klein Lankhorst R.M."/>
            <person name="Bron P.A."/>
            <person name="Hoffer S.M."/>
            <person name="Nierop Groot M.N."/>
            <person name="Kerkhoven R."/>
            <person name="De Vries M."/>
            <person name="Ursing B."/>
            <person name="De Vos W.M."/>
            <person name="Siezen R.J."/>
        </authorList>
    </citation>
    <scope>NUCLEOTIDE SEQUENCE [LARGE SCALE GENOMIC DNA]</scope>
    <source>
        <strain>ATCC BAA-793 / NCIMB 8826 / WCFS1</strain>
    </source>
</reference>
<reference key="2">
    <citation type="journal article" date="2012" name="J. Bacteriol.">
        <title>Complete resequencing and reannotation of the Lactobacillus plantarum WCFS1 genome.</title>
        <authorList>
            <person name="Siezen R.J."/>
            <person name="Francke C."/>
            <person name="Renckens B."/>
            <person name="Boekhorst J."/>
            <person name="Wels M."/>
            <person name="Kleerebezem M."/>
            <person name="van Hijum S.A."/>
        </authorList>
    </citation>
    <scope>NUCLEOTIDE SEQUENCE [LARGE SCALE GENOMIC DNA]</scope>
    <scope>GENOME REANNOTATION</scope>
    <source>
        <strain>ATCC BAA-793 / NCIMB 8826 / WCFS1</strain>
    </source>
</reference>
<reference key="3">
    <citation type="journal article" date="1983" name="J. Biol. Chem.">
        <title>Malolactic enzyme of Lactobacillus plantarum. Purification, properties, and distribution among bacteria.</title>
        <authorList>
            <person name="Caspritz G."/>
            <person name="Radler F."/>
        </authorList>
    </citation>
    <scope>FUNCTION</scope>
    <scope>CATALYTIC ACTIVITY</scope>
    <scope>BIOPHYSICOCHEMICAL PROPERTIES</scope>
    <scope>COFACTOR</scope>
    <scope>SUBUNIT</scope>
</reference>
<dbReference type="EC" id="4.1.1.101" evidence="2"/>
<dbReference type="EMBL" id="AL935263">
    <property type="protein sequence ID" value="CCC78515.1"/>
    <property type="molecule type" value="Genomic_DNA"/>
</dbReference>
<dbReference type="RefSeq" id="WP_011101261.1">
    <property type="nucleotide sequence ID" value="NC_004567.2"/>
</dbReference>
<dbReference type="RefSeq" id="YP_004889029.1">
    <property type="nucleotide sequence ID" value="NC_004567.2"/>
</dbReference>
<dbReference type="SMR" id="F9UMS6"/>
<dbReference type="STRING" id="220668.lp_1118"/>
<dbReference type="EnsemblBacteria" id="CCC78515">
    <property type="protein sequence ID" value="CCC78515"/>
    <property type="gene ID" value="lp_1118"/>
</dbReference>
<dbReference type="KEGG" id="lpl:lp_1118"/>
<dbReference type="PATRIC" id="fig|220668.9.peg.945"/>
<dbReference type="eggNOG" id="COG0281">
    <property type="taxonomic scope" value="Bacteria"/>
</dbReference>
<dbReference type="HOGENOM" id="CLU_011405_5_2_9"/>
<dbReference type="OrthoDB" id="3314528at2"/>
<dbReference type="PhylomeDB" id="F9UMS6"/>
<dbReference type="Proteomes" id="UP000000432">
    <property type="component" value="Chromosome"/>
</dbReference>
<dbReference type="GO" id="GO:0005829">
    <property type="term" value="C:cytosol"/>
    <property type="evidence" value="ECO:0007669"/>
    <property type="project" value="TreeGrafter"/>
</dbReference>
<dbReference type="GO" id="GO:0016831">
    <property type="term" value="F:carboxy-lyase activity"/>
    <property type="evidence" value="ECO:0000314"/>
    <property type="project" value="UniProtKB"/>
</dbReference>
<dbReference type="GO" id="GO:0004470">
    <property type="term" value="F:malic enzyme activity"/>
    <property type="evidence" value="ECO:0007669"/>
    <property type="project" value="InterPro"/>
</dbReference>
<dbReference type="GO" id="GO:0043883">
    <property type="term" value="F:malolactic enzyme activity"/>
    <property type="evidence" value="ECO:0007669"/>
    <property type="project" value="UniProtKB-EC"/>
</dbReference>
<dbReference type="GO" id="GO:0030145">
    <property type="term" value="F:manganese ion binding"/>
    <property type="evidence" value="ECO:0000314"/>
    <property type="project" value="UniProtKB"/>
</dbReference>
<dbReference type="GO" id="GO:0051287">
    <property type="term" value="F:NAD binding"/>
    <property type="evidence" value="ECO:0000314"/>
    <property type="project" value="UniProtKB"/>
</dbReference>
<dbReference type="GO" id="GO:0016616">
    <property type="term" value="F:oxidoreductase activity, acting on the CH-OH group of donors, NAD or NADP as acceptor"/>
    <property type="evidence" value="ECO:0007669"/>
    <property type="project" value="InterPro"/>
</dbReference>
<dbReference type="GO" id="GO:0006108">
    <property type="term" value="P:malate metabolic process"/>
    <property type="evidence" value="ECO:0007669"/>
    <property type="project" value="TreeGrafter"/>
</dbReference>
<dbReference type="GO" id="GO:0043464">
    <property type="term" value="P:malolactic fermentation"/>
    <property type="evidence" value="ECO:0000314"/>
    <property type="project" value="UniProtKB"/>
</dbReference>
<dbReference type="FunFam" id="3.40.50.10380:FF:000001">
    <property type="entry name" value="NAD-dependent malic enzyme"/>
    <property type="match status" value="1"/>
</dbReference>
<dbReference type="FunFam" id="3.40.50.720:FF:000182">
    <property type="entry name" value="NAD-dependent malic enzyme"/>
    <property type="match status" value="1"/>
</dbReference>
<dbReference type="Gene3D" id="3.40.50.10380">
    <property type="entry name" value="Malic enzyme, N-terminal domain"/>
    <property type="match status" value="1"/>
</dbReference>
<dbReference type="Gene3D" id="3.40.50.720">
    <property type="entry name" value="NAD(P)-binding Rossmann-like Domain"/>
    <property type="match status" value="1"/>
</dbReference>
<dbReference type="InterPro" id="IPR046346">
    <property type="entry name" value="Aminoacid_DH-like_N_sf"/>
</dbReference>
<dbReference type="InterPro" id="IPR015884">
    <property type="entry name" value="Malic_enzyme_CS"/>
</dbReference>
<dbReference type="InterPro" id="IPR012301">
    <property type="entry name" value="Malic_N_dom"/>
</dbReference>
<dbReference type="InterPro" id="IPR037062">
    <property type="entry name" value="Malic_N_dom_sf"/>
</dbReference>
<dbReference type="InterPro" id="IPR012302">
    <property type="entry name" value="Malic_NAD-bd"/>
</dbReference>
<dbReference type="InterPro" id="IPR001891">
    <property type="entry name" value="Malic_OxRdtase"/>
</dbReference>
<dbReference type="InterPro" id="IPR048182">
    <property type="entry name" value="Malolactic_enz"/>
</dbReference>
<dbReference type="InterPro" id="IPR036291">
    <property type="entry name" value="NAD(P)-bd_dom_sf"/>
</dbReference>
<dbReference type="NCBIfam" id="NF041582">
    <property type="entry name" value="malolactic"/>
    <property type="match status" value="1"/>
</dbReference>
<dbReference type="NCBIfam" id="NF010052">
    <property type="entry name" value="PRK13529.1"/>
    <property type="match status" value="1"/>
</dbReference>
<dbReference type="PANTHER" id="PTHR23406">
    <property type="entry name" value="MALIC ENZYME-RELATED"/>
    <property type="match status" value="1"/>
</dbReference>
<dbReference type="PANTHER" id="PTHR23406:SF34">
    <property type="entry name" value="NAD-DEPENDENT MALIC ENZYME, MITOCHONDRIAL"/>
    <property type="match status" value="1"/>
</dbReference>
<dbReference type="Pfam" id="PF00390">
    <property type="entry name" value="malic"/>
    <property type="match status" value="1"/>
</dbReference>
<dbReference type="Pfam" id="PF03949">
    <property type="entry name" value="Malic_M"/>
    <property type="match status" value="1"/>
</dbReference>
<dbReference type="PIRSF" id="PIRSF000106">
    <property type="entry name" value="ME"/>
    <property type="match status" value="1"/>
</dbReference>
<dbReference type="PRINTS" id="PR00072">
    <property type="entry name" value="MALOXRDTASE"/>
</dbReference>
<dbReference type="SMART" id="SM01274">
    <property type="entry name" value="malic"/>
    <property type="match status" value="1"/>
</dbReference>
<dbReference type="SMART" id="SM00919">
    <property type="entry name" value="Malic_M"/>
    <property type="match status" value="1"/>
</dbReference>
<dbReference type="SUPFAM" id="SSF53223">
    <property type="entry name" value="Aminoacid dehydrogenase-like, N-terminal domain"/>
    <property type="match status" value="1"/>
</dbReference>
<dbReference type="SUPFAM" id="SSF51735">
    <property type="entry name" value="NAD(P)-binding Rossmann-fold domains"/>
    <property type="match status" value="1"/>
</dbReference>
<dbReference type="PROSITE" id="PS00331">
    <property type="entry name" value="MALIC_ENZYMES"/>
    <property type="match status" value="1"/>
</dbReference>